<reference key="1">
    <citation type="submission" date="2007-06" db="EMBL/GenBank/DDBJ databases">
        <title>Complete sequence of Methanococcus aeolicus Nankai-3.</title>
        <authorList>
            <consortium name="US DOE Joint Genome Institute"/>
            <person name="Copeland A."/>
            <person name="Lucas S."/>
            <person name="Lapidus A."/>
            <person name="Barry K."/>
            <person name="Glavina del Rio T."/>
            <person name="Dalin E."/>
            <person name="Tice H."/>
            <person name="Pitluck S."/>
            <person name="Chain P."/>
            <person name="Malfatti S."/>
            <person name="Shin M."/>
            <person name="Vergez L."/>
            <person name="Schmutz J."/>
            <person name="Larimer F."/>
            <person name="Land M."/>
            <person name="Hauser L."/>
            <person name="Kyrpides N."/>
            <person name="Lykidis A."/>
            <person name="Sieprawska-Lupa M."/>
            <person name="Whitman W.B."/>
            <person name="Richardson P."/>
        </authorList>
    </citation>
    <scope>NUCLEOTIDE SEQUENCE [LARGE SCALE GENOMIC DNA]</scope>
    <source>
        <strain>ATCC BAA-1280 / DSM 17508 / OCM 812 / Nankai-3</strain>
    </source>
</reference>
<sequence length="504" mass="54896">MLFLEVKFLDLDLEANAVIINEEDIKGTAYYSQDRVLIESKTCSFIGTLQSTKTMIKPGEVGVSKYIKDVKLNEGEEVRVRHAQKPQSVSYIRKKMNGQTLTADEIHTIIDEIVSKKLTNVELSAFLVSTYIRGMNTEEIVAMTKRMAETGDTIQWEKRPVVDVHSIGGVPGNKYALLTIPIVAAAGMTIPKTSSRAITSAAGTADVLEVITNVNLSCEEIQRVAKTTGGCLAWGGAVNLAPADDIIINVERPLSIDPQPQLLASVMAKKIATGIDYTVIDIPVGYGVKIKNEKEGNQLARKFIELGELLGIRVECVLTYGGQPIGRAIGPALEIKEALMALHDPKSAPNSLIEKSVSLAGVLLELGGRAQIGQGQKVAWEILESGKALEKFNEIVVEQGGTITKPEEIELGEYTMDIRSPKDGYVTGISNKLITKLAKEAGCPKDKKAGIFLGVKTGNKVNKEDILYTIYSSSEERLDAAVNFARRTYPIKVEGMMLKRLSKF</sequence>
<keyword id="KW-0328">Glycosyltransferase</keyword>
<keyword id="KW-0808">Transferase</keyword>
<organism>
    <name type="scientific">Methanococcus aeolicus (strain ATCC BAA-1280 / DSM 17508 / OCM 812 / Nankai-3)</name>
    <dbReference type="NCBI Taxonomy" id="419665"/>
    <lineage>
        <taxon>Archaea</taxon>
        <taxon>Methanobacteriati</taxon>
        <taxon>Methanobacteriota</taxon>
        <taxon>Methanomada group</taxon>
        <taxon>Methanococci</taxon>
        <taxon>Methanococcales</taxon>
        <taxon>Methanococcaceae</taxon>
        <taxon>Methanococcus</taxon>
    </lineage>
</organism>
<comment type="function">
    <text evidence="1">Catalyzes the conversion of AMP and phosphate to adenine and ribose 1,5-bisphosphate (R15P). Exhibits phosphorylase activity toward CMP and UMP in addition to AMP. Functions in an archaeal AMP degradation pathway, together with R15P isomerase and RubisCO.</text>
</comment>
<comment type="catalytic activity">
    <reaction evidence="1">
        <text>AMP + phosphate = alpha-D-ribose 1,5-bisphosphate + adenine</text>
        <dbReference type="Rhea" id="RHEA:36975"/>
        <dbReference type="ChEBI" id="CHEBI:16708"/>
        <dbReference type="ChEBI" id="CHEBI:43474"/>
        <dbReference type="ChEBI" id="CHEBI:68688"/>
        <dbReference type="ChEBI" id="CHEBI:456215"/>
        <dbReference type="EC" id="2.4.2.57"/>
    </reaction>
</comment>
<comment type="catalytic activity">
    <reaction evidence="1">
        <text>CMP + phosphate = cytosine + alpha-D-ribose 1,5-bisphosphate</text>
        <dbReference type="Rhea" id="RHEA:36987"/>
        <dbReference type="ChEBI" id="CHEBI:16040"/>
        <dbReference type="ChEBI" id="CHEBI:43474"/>
        <dbReference type="ChEBI" id="CHEBI:60377"/>
        <dbReference type="ChEBI" id="CHEBI:68688"/>
        <dbReference type="EC" id="2.4.2.57"/>
    </reaction>
</comment>
<comment type="catalytic activity">
    <reaction evidence="1">
        <text>UMP + phosphate = alpha-D-ribose 1,5-bisphosphate + uracil</text>
        <dbReference type="Rhea" id="RHEA:36991"/>
        <dbReference type="ChEBI" id="CHEBI:17568"/>
        <dbReference type="ChEBI" id="CHEBI:43474"/>
        <dbReference type="ChEBI" id="CHEBI:57865"/>
        <dbReference type="ChEBI" id="CHEBI:68688"/>
        <dbReference type="EC" id="2.4.2.57"/>
    </reaction>
</comment>
<comment type="similarity">
    <text evidence="1">Belongs to the thymidine/pyrimidine-nucleoside phosphorylase family. Type 2 subfamily.</text>
</comment>
<name>AMPPA_META3</name>
<gene>
    <name type="ordered locus">Maeo_0618</name>
</gene>
<proteinExistence type="inferred from homology"/>
<dbReference type="EC" id="2.4.2.57" evidence="1"/>
<dbReference type="EMBL" id="CP000743">
    <property type="protein sequence ID" value="ABR56202.1"/>
    <property type="molecule type" value="Genomic_DNA"/>
</dbReference>
<dbReference type="RefSeq" id="WP_011973334.1">
    <property type="nucleotide sequence ID" value="NC_009635.1"/>
</dbReference>
<dbReference type="SMR" id="A6UUN0"/>
<dbReference type="STRING" id="419665.Maeo_0618"/>
<dbReference type="GeneID" id="5326374"/>
<dbReference type="KEGG" id="mae:Maeo_0618"/>
<dbReference type="eggNOG" id="arCOG02013">
    <property type="taxonomic scope" value="Archaea"/>
</dbReference>
<dbReference type="HOGENOM" id="CLU_025040_6_0_2"/>
<dbReference type="OrthoDB" id="9827at2157"/>
<dbReference type="Proteomes" id="UP000001106">
    <property type="component" value="Chromosome"/>
</dbReference>
<dbReference type="GO" id="GO:0005829">
    <property type="term" value="C:cytosol"/>
    <property type="evidence" value="ECO:0007669"/>
    <property type="project" value="TreeGrafter"/>
</dbReference>
<dbReference type="GO" id="GO:0004645">
    <property type="term" value="F:1,4-alpha-oligoglucan phosphorylase activity"/>
    <property type="evidence" value="ECO:0007669"/>
    <property type="project" value="InterPro"/>
</dbReference>
<dbReference type="GO" id="GO:0016208">
    <property type="term" value="F:AMP binding"/>
    <property type="evidence" value="ECO:0007669"/>
    <property type="project" value="UniProtKB-UniRule"/>
</dbReference>
<dbReference type="GO" id="GO:0016763">
    <property type="term" value="F:pentosyltransferase activity"/>
    <property type="evidence" value="ECO:0007669"/>
    <property type="project" value="UniProtKB-UniRule"/>
</dbReference>
<dbReference type="GO" id="GO:0006196">
    <property type="term" value="P:AMP catabolic process"/>
    <property type="evidence" value="ECO:0007669"/>
    <property type="project" value="UniProtKB-UniRule"/>
</dbReference>
<dbReference type="GO" id="GO:0046125">
    <property type="term" value="P:pyrimidine deoxyribonucleoside metabolic process"/>
    <property type="evidence" value="ECO:0007669"/>
    <property type="project" value="InterPro"/>
</dbReference>
<dbReference type="GO" id="GO:0006206">
    <property type="term" value="P:pyrimidine nucleobase metabolic process"/>
    <property type="evidence" value="ECO:0007669"/>
    <property type="project" value="InterPro"/>
</dbReference>
<dbReference type="Gene3D" id="1.20.970.50">
    <property type="match status" value="1"/>
</dbReference>
<dbReference type="Gene3D" id="2.40.40.20">
    <property type="match status" value="1"/>
</dbReference>
<dbReference type="Gene3D" id="3.40.1030.10">
    <property type="entry name" value="Nucleoside phosphorylase/phosphoribosyltransferase catalytic domain"/>
    <property type="match status" value="1"/>
</dbReference>
<dbReference type="Gene3D" id="3.90.1170.30">
    <property type="entry name" value="Pyrimidine nucleoside phosphorylase-like, C-terminal domain"/>
    <property type="match status" value="1"/>
</dbReference>
<dbReference type="HAMAP" id="MF_02132">
    <property type="entry name" value="AMP_phosphorylase"/>
    <property type="match status" value="1"/>
</dbReference>
<dbReference type="InterPro" id="IPR017713">
    <property type="entry name" value="AMP_phosphorylase"/>
</dbReference>
<dbReference type="InterPro" id="IPR000312">
    <property type="entry name" value="Glycosyl_Trfase_fam3"/>
</dbReference>
<dbReference type="InterPro" id="IPR017459">
    <property type="entry name" value="Glycosyl_Trfase_fam3_N_dom"/>
</dbReference>
<dbReference type="InterPro" id="IPR036320">
    <property type="entry name" value="Glycosyl_Trfase_fam3_N_dom_sf"/>
</dbReference>
<dbReference type="InterPro" id="IPR035902">
    <property type="entry name" value="Nuc_phospho_transferase"/>
</dbReference>
<dbReference type="InterPro" id="IPR036566">
    <property type="entry name" value="PYNP-like_C_sf"/>
</dbReference>
<dbReference type="InterPro" id="IPR013102">
    <property type="entry name" value="PYNP_C"/>
</dbReference>
<dbReference type="InterPro" id="IPR017872">
    <property type="entry name" value="Pyrmidine_PPase_CS"/>
</dbReference>
<dbReference type="InterPro" id="IPR013466">
    <property type="entry name" value="Thymidine/AMP_Pase"/>
</dbReference>
<dbReference type="InterPro" id="IPR000053">
    <property type="entry name" value="Thymidine/pyrmidine_PPase"/>
</dbReference>
<dbReference type="NCBIfam" id="TIGR03327">
    <property type="entry name" value="AMP_phos"/>
    <property type="match status" value="1"/>
</dbReference>
<dbReference type="NCBIfam" id="TIGR02645">
    <property type="entry name" value="ARCH_P_rylase"/>
    <property type="match status" value="1"/>
</dbReference>
<dbReference type="NCBIfam" id="NF003338">
    <property type="entry name" value="PRK04350.1"/>
    <property type="match status" value="1"/>
</dbReference>
<dbReference type="PANTHER" id="PTHR10515">
    <property type="entry name" value="THYMIDINE PHOSPHORYLASE"/>
    <property type="match status" value="1"/>
</dbReference>
<dbReference type="PANTHER" id="PTHR10515:SF0">
    <property type="entry name" value="THYMIDINE PHOSPHORYLASE"/>
    <property type="match status" value="1"/>
</dbReference>
<dbReference type="Pfam" id="PF02885">
    <property type="entry name" value="Glycos_trans_3N"/>
    <property type="match status" value="1"/>
</dbReference>
<dbReference type="Pfam" id="PF00591">
    <property type="entry name" value="Glycos_transf_3"/>
    <property type="match status" value="1"/>
</dbReference>
<dbReference type="Pfam" id="PF07831">
    <property type="entry name" value="PYNP_C"/>
    <property type="match status" value="1"/>
</dbReference>
<dbReference type="PIRSF" id="PIRSF000478">
    <property type="entry name" value="TP_PyNP"/>
    <property type="match status" value="1"/>
</dbReference>
<dbReference type="SMART" id="SM00941">
    <property type="entry name" value="PYNP_C"/>
    <property type="match status" value="1"/>
</dbReference>
<dbReference type="SUPFAM" id="SSF52418">
    <property type="entry name" value="Nucleoside phosphorylase/phosphoribosyltransferase catalytic domain"/>
    <property type="match status" value="1"/>
</dbReference>
<dbReference type="SUPFAM" id="SSF47648">
    <property type="entry name" value="Nucleoside phosphorylase/phosphoribosyltransferase N-terminal domain"/>
    <property type="match status" value="1"/>
</dbReference>
<dbReference type="SUPFAM" id="SSF54680">
    <property type="entry name" value="Pyrimidine nucleoside phosphorylase C-terminal domain"/>
    <property type="match status" value="1"/>
</dbReference>
<dbReference type="PROSITE" id="PS00647">
    <property type="entry name" value="THYMID_PHOSPHORYLASE"/>
    <property type="match status" value="1"/>
</dbReference>
<feature type="chain" id="PRO_0000314721" description="AMP phosphorylase">
    <location>
        <begin position="1"/>
        <end position="504"/>
    </location>
</feature>
<feature type="active site" description="Proton donor" evidence="1">
    <location>
        <position position="257"/>
    </location>
</feature>
<feature type="binding site" evidence="1">
    <location>
        <position position="169"/>
    </location>
    <ligand>
        <name>AMP</name>
        <dbReference type="ChEBI" id="CHEBI:456215"/>
    </ligand>
</feature>
<feature type="binding site" evidence="1">
    <location>
        <begin position="195"/>
        <end position="200"/>
    </location>
    <ligand>
        <name>AMP</name>
        <dbReference type="ChEBI" id="CHEBI:456215"/>
    </ligand>
</feature>
<feature type="binding site" evidence="1">
    <location>
        <position position="204"/>
    </location>
    <ligand>
        <name>AMP</name>
        <dbReference type="ChEBI" id="CHEBI:456215"/>
    </ligand>
</feature>
<feature type="binding site" evidence="1">
    <location>
        <position position="265"/>
    </location>
    <ligand>
        <name>AMP</name>
        <dbReference type="ChEBI" id="CHEBI:456215"/>
    </ligand>
</feature>
<feature type="binding site" evidence="1">
    <location>
        <position position="289"/>
    </location>
    <ligand>
        <name>AMP</name>
        <dbReference type="ChEBI" id="CHEBI:456215"/>
    </ligand>
</feature>
<protein>
    <recommendedName>
        <fullName evidence="1">AMP phosphorylase</fullName>
        <shortName evidence="1">AMPpase</shortName>
        <ecNumber evidence="1">2.4.2.57</ecNumber>
    </recommendedName>
    <alternativeName>
        <fullName evidence="1">Nucleoside monophosphate phosphorylase</fullName>
        <shortName evidence="1">NMP phosphorylase</shortName>
    </alternativeName>
</protein>
<evidence type="ECO:0000255" key="1">
    <source>
        <dbReference type="HAMAP-Rule" id="MF_02132"/>
    </source>
</evidence>
<accession>A6UUN0</accession>